<sequence length="328" mass="36112">MDRDQTNSSLFNDDPVLHATWLYYQEGKSQTEVAAIMGVSRVTVVKYLQTARENGLVHINLDVNVFGSIDAALQIRDKFNLQRVIIVPDGEHAGKRDDTKLMRTRLSRAGGMYLNQVIENGDVLGVAWGRTIHQMSKTMTPKSCKNVTVIQMLGSMPSQPDLTIIESSSQIAYKLSGRVASLHVPAVVSSARLAMELQAEPIIRSNFDVLTRCTKAFFVVGNALDENPLIRVGVLNKKEMQTYRDLGAVGVICGRFYDKEGMPVVADVDQRILGISLAQLRQIERKIFLAGGERGYDATLGALLGGYVTDLIVDEGTAEFLLACELPH</sequence>
<gene>
    <name type="primary">yjhU</name>
    <name type="ordered locus">b4295</name>
    <name type="ordered locus">JW5952</name>
</gene>
<comment type="similarity">
    <text evidence="2">Belongs to the SorC transcriptional regulatory family.</text>
</comment>
<comment type="sequence caution" evidence="2">
    <conflict type="erroneous initiation">
        <sequence resource="EMBL-CDS" id="AAA97191"/>
    </conflict>
</comment>
<dbReference type="EMBL" id="U14003">
    <property type="protein sequence ID" value="AAA97191.1"/>
    <property type="status" value="ALT_INIT"/>
    <property type="molecule type" value="Genomic_DNA"/>
</dbReference>
<dbReference type="EMBL" id="U00096">
    <property type="protein sequence ID" value="AAC77251.2"/>
    <property type="molecule type" value="Genomic_DNA"/>
</dbReference>
<dbReference type="EMBL" id="AP009048">
    <property type="protein sequence ID" value="BAE78286.1"/>
    <property type="molecule type" value="Genomic_DNA"/>
</dbReference>
<dbReference type="PIR" id="S56520">
    <property type="entry name" value="S56520"/>
</dbReference>
<dbReference type="RefSeq" id="NP_418715.2">
    <property type="nucleotide sequence ID" value="NC_000913.3"/>
</dbReference>
<dbReference type="RefSeq" id="WP_000373366.1">
    <property type="nucleotide sequence ID" value="NZ_SSUV01000012.1"/>
</dbReference>
<dbReference type="SMR" id="P39356"/>
<dbReference type="BioGRID" id="4260975">
    <property type="interactions" value="125"/>
</dbReference>
<dbReference type="DIP" id="DIP-12629N"/>
<dbReference type="FunCoup" id="P39356">
    <property type="interactions" value="63"/>
</dbReference>
<dbReference type="STRING" id="511145.b4295"/>
<dbReference type="jPOST" id="P39356"/>
<dbReference type="PaxDb" id="511145-b4295"/>
<dbReference type="EnsemblBacteria" id="AAC77251">
    <property type="protein sequence ID" value="AAC77251"/>
    <property type="gene ID" value="b4295"/>
</dbReference>
<dbReference type="GeneID" id="948827"/>
<dbReference type="KEGG" id="ecj:JW5952"/>
<dbReference type="KEGG" id="eco:b4295"/>
<dbReference type="KEGG" id="ecoc:C3026_23170"/>
<dbReference type="PATRIC" id="fig|1411691.4.peg.2403"/>
<dbReference type="EchoBASE" id="EB2488"/>
<dbReference type="eggNOG" id="COG2390">
    <property type="taxonomic scope" value="Bacteria"/>
</dbReference>
<dbReference type="HOGENOM" id="CLU_054506_0_1_6"/>
<dbReference type="InParanoid" id="P39356"/>
<dbReference type="OMA" id="KAAWLYY"/>
<dbReference type="OrthoDB" id="9808171at2"/>
<dbReference type="PhylomeDB" id="P39356"/>
<dbReference type="BioCyc" id="EcoCyc:G7909-MONOMER"/>
<dbReference type="PRO" id="PR:P39356"/>
<dbReference type="Proteomes" id="UP000000625">
    <property type="component" value="Chromosome"/>
</dbReference>
<dbReference type="GO" id="GO:0005829">
    <property type="term" value="C:cytosol"/>
    <property type="evidence" value="ECO:0000314"/>
    <property type="project" value="EcoCyc"/>
</dbReference>
<dbReference type="GO" id="GO:0030246">
    <property type="term" value="F:carbohydrate binding"/>
    <property type="evidence" value="ECO:0007669"/>
    <property type="project" value="InterPro"/>
</dbReference>
<dbReference type="GO" id="GO:0000987">
    <property type="term" value="F:cis-regulatory region sequence-specific DNA binding"/>
    <property type="evidence" value="ECO:0000318"/>
    <property type="project" value="GO_Central"/>
</dbReference>
<dbReference type="GO" id="GO:0003677">
    <property type="term" value="F:DNA binding"/>
    <property type="evidence" value="ECO:0000314"/>
    <property type="project" value="EcoCyc"/>
</dbReference>
<dbReference type="GO" id="GO:2000142">
    <property type="term" value="P:regulation of DNA-templated transcription initiation"/>
    <property type="evidence" value="ECO:0000318"/>
    <property type="project" value="GO_Central"/>
</dbReference>
<dbReference type="Gene3D" id="3.40.50.1360">
    <property type="match status" value="1"/>
</dbReference>
<dbReference type="Gene3D" id="1.10.10.10">
    <property type="entry name" value="Winged helix-like DNA-binding domain superfamily/Winged helix DNA-binding domain"/>
    <property type="match status" value="1"/>
</dbReference>
<dbReference type="InterPro" id="IPR037171">
    <property type="entry name" value="NagB/RpiA_transferase-like"/>
</dbReference>
<dbReference type="InterPro" id="IPR013324">
    <property type="entry name" value="RNA_pol_sigma_r3/r4-like"/>
</dbReference>
<dbReference type="InterPro" id="IPR051054">
    <property type="entry name" value="SorC_transcr_regulators"/>
</dbReference>
<dbReference type="InterPro" id="IPR007324">
    <property type="entry name" value="Sugar-bd_dom_put"/>
</dbReference>
<dbReference type="InterPro" id="IPR036388">
    <property type="entry name" value="WH-like_DNA-bd_sf"/>
</dbReference>
<dbReference type="PANTHER" id="PTHR34294:SF1">
    <property type="entry name" value="TRANSCRIPTIONAL REGULATOR LSRR"/>
    <property type="match status" value="1"/>
</dbReference>
<dbReference type="PANTHER" id="PTHR34294">
    <property type="entry name" value="TRANSCRIPTIONAL REGULATOR-RELATED"/>
    <property type="match status" value="1"/>
</dbReference>
<dbReference type="Pfam" id="PF04198">
    <property type="entry name" value="Sugar-bind"/>
    <property type="match status" value="1"/>
</dbReference>
<dbReference type="SUPFAM" id="SSF100950">
    <property type="entry name" value="NagB/RpiA/CoA transferase-like"/>
    <property type="match status" value="1"/>
</dbReference>
<dbReference type="SUPFAM" id="SSF88659">
    <property type="entry name" value="Sigma3 and sigma4 domains of RNA polymerase sigma factors"/>
    <property type="match status" value="1"/>
</dbReference>
<proteinExistence type="inferred from homology"/>
<protein>
    <recommendedName>
        <fullName>Uncharacterized transcriptional regulator YjhU</fullName>
    </recommendedName>
</protein>
<feature type="chain" id="PRO_0000062791" description="Uncharacterized transcriptional regulator YjhU">
    <location>
        <begin position="1"/>
        <end position="328"/>
    </location>
</feature>
<feature type="DNA-binding region" description="H-T-H motif" evidence="1">
    <location>
        <begin position="72"/>
        <end position="91"/>
    </location>
</feature>
<keyword id="KW-0238">DNA-binding</keyword>
<keyword id="KW-1185">Reference proteome</keyword>
<keyword id="KW-0804">Transcription</keyword>
<keyword id="KW-0805">Transcription regulation</keyword>
<evidence type="ECO:0000255" key="1"/>
<evidence type="ECO:0000305" key="2"/>
<organism>
    <name type="scientific">Escherichia coli (strain K12)</name>
    <dbReference type="NCBI Taxonomy" id="83333"/>
    <lineage>
        <taxon>Bacteria</taxon>
        <taxon>Pseudomonadati</taxon>
        <taxon>Pseudomonadota</taxon>
        <taxon>Gammaproteobacteria</taxon>
        <taxon>Enterobacterales</taxon>
        <taxon>Enterobacteriaceae</taxon>
        <taxon>Escherichia</taxon>
    </lineage>
</organism>
<reference key="1">
    <citation type="journal article" date="1995" name="Nucleic Acids Res.">
        <title>Analysis of the Escherichia coli genome VI: DNA sequence of the region from 92.8 through 100 minutes.</title>
        <authorList>
            <person name="Burland V.D."/>
            <person name="Plunkett G. III"/>
            <person name="Sofia H.J."/>
            <person name="Daniels D.L."/>
            <person name="Blattner F.R."/>
        </authorList>
    </citation>
    <scope>NUCLEOTIDE SEQUENCE [LARGE SCALE GENOMIC DNA]</scope>
    <source>
        <strain>K12 / MG1655 / ATCC 47076</strain>
    </source>
</reference>
<reference key="2">
    <citation type="journal article" date="1997" name="Science">
        <title>The complete genome sequence of Escherichia coli K-12.</title>
        <authorList>
            <person name="Blattner F.R."/>
            <person name="Plunkett G. III"/>
            <person name="Bloch C.A."/>
            <person name="Perna N.T."/>
            <person name="Burland V."/>
            <person name="Riley M."/>
            <person name="Collado-Vides J."/>
            <person name="Glasner J.D."/>
            <person name="Rode C.K."/>
            <person name="Mayhew G.F."/>
            <person name="Gregor J."/>
            <person name="Davis N.W."/>
            <person name="Kirkpatrick H.A."/>
            <person name="Goeden M.A."/>
            <person name="Rose D.J."/>
            <person name="Mau B."/>
            <person name="Shao Y."/>
        </authorList>
    </citation>
    <scope>NUCLEOTIDE SEQUENCE [LARGE SCALE GENOMIC DNA]</scope>
    <source>
        <strain>K12 / MG1655 / ATCC 47076</strain>
    </source>
</reference>
<reference key="3">
    <citation type="journal article" date="2006" name="Mol. Syst. Biol.">
        <title>Highly accurate genome sequences of Escherichia coli K-12 strains MG1655 and W3110.</title>
        <authorList>
            <person name="Hayashi K."/>
            <person name="Morooka N."/>
            <person name="Yamamoto Y."/>
            <person name="Fujita K."/>
            <person name="Isono K."/>
            <person name="Choi S."/>
            <person name="Ohtsubo E."/>
            <person name="Baba T."/>
            <person name="Wanner B.L."/>
            <person name="Mori H."/>
            <person name="Horiuchi T."/>
        </authorList>
    </citation>
    <scope>NUCLEOTIDE SEQUENCE [LARGE SCALE GENOMIC DNA]</scope>
    <source>
        <strain>K12 / W3110 / ATCC 27325 / DSM 5911</strain>
    </source>
</reference>
<name>YJHU_ECOLI</name>
<accession>P39356</accession>
<accession>Q2M620</accession>